<proteinExistence type="inferred from homology"/>
<name>GLO2_SALAR</name>
<evidence type="ECO:0000255" key="1">
    <source>
        <dbReference type="HAMAP-Rule" id="MF_01374"/>
    </source>
</evidence>
<dbReference type="EC" id="3.1.2.6" evidence="1"/>
<dbReference type="EMBL" id="CP000880">
    <property type="protein sequence ID" value="ABX22596.1"/>
    <property type="molecule type" value="Genomic_DNA"/>
</dbReference>
<dbReference type="SMR" id="A9MPF3"/>
<dbReference type="STRING" id="41514.SARI_02741"/>
<dbReference type="KEGG" id="ses:SARI_02741"/>
<dbReference type="HOGENOM" id="CLU_030571_4_1_6"/>
<dbReference type="UniPathway" id="UPA00619">
    <property type="reaction ID" value="UER00676"/>
</dbReference>
<dbReference type="Proteomes" id="UP000002084">
    <property type="component" value="Chromosome"/>
</dbReference>
<dbReference type="GO" id="GO:0004416">
    <property type="term" value="F:hydroxyacylglutathione hydrolase activity"/>
    <property type="evidence" value="ECO:0007669"/>
    <property type="project" value="UniProtKB-UniRule"/>
</dbReference>
<dbReference type="GO" id="GO:0046872">
    <property type="term" value="F:metal ion binding"/>
    <property type="evidence" value="ECO:0007669"/>
    <property type="project" value="UniProtKB-KW"/>
</dbReference>
<dbReference type="GO" id="GO:0019243">
    <property type="term" value="P:methylglyoxal catabolic process to D-lactate via S-lactoyl-glutathione"/>
    <property type="evidence" value="ECO:0007669"/>
    <property type="project" value="InterPro"/>
</dbReference>
<dbReference type="CDD" id="cd07723">
    <property type="entry name" value="hydroxyacylglutathione_hydrolase_MBL-fold"/>
    <property type="match status" value="1"/>
</dbReference>
<dbReference type="Gene3D" id="3.60.15.10">
    <property type="entry name" value="Ribonuclease Z/Hydroxyacylglutathione hydrolase-like"/>
    <property type="match status" value="1"/>
</dbReference>
<dbReference type="HAMAP" id="MF_01374">
    <property type="entry name" value="Glyoxalase_2"/>
    <property type="match status" value="1"/>
</dbReference>
<dbReference type="InterPro" id="IPR035680">
    <property type="entry name" value="Clx_II_MBL"/>
</dbReference>
<dbReference type="InterPro" id="IPR050110">
    <property type="entry name" value="Glyoxalase_II_hydrolase"/>
</dbReference>
<dbReference type="InterPro" id="IPR032282">
    <property type="entry name" value="HAGH_C"/>
</dbReference>
<dbReference type="InterPro" id="IPR017782">
    <property type="entry name" value="Hydroxyacylglutathione_Hdrlase"/>
</dbReference>
<dbReference type="InterPro" id="IPR001279">
    <property type="entry name" value="Metallo-B-lactamas"/>
</dbReference>
<dbReference type="InterPro" id="IPR036866">
    <property type="entry name" value="RibonucZ/Hydroxyglut_hydro"/>
</dbReference>
<dbReference type="NCBIfam" id="TIGR03413">
    <property type="entry name" value="GSH_gloB"/>
    <property type="match status" value="1"/>
</dbReference>
<dbReference type="NCBIfam" id="NF007597">
    <property type="entry name" value="PRK10241.1"/>
    <property type="match status" value="1"/>
</dbReference>
<dbReference type="PANTHER" id="PTHR43705">
    <property type="entry name" value="HYDROXYACYLGLUTATHIONE HYDROLASE"/>
    <property type="match status" value="1"/>
</dbReference>
<dbReference type="PANTHER" id="PTHR43705:SF1">
    <property type="entry name" value="HYDROXYACYLGLUTATHIONE HYDROLASE GLOB"/>
    <property type="match status" value="1"/>
</dbReference>
<dbReference type="Pfam" id="PF16123">
    <property type="entry name" value="HAGH_C"/>
    <property type="match status" value="1"/>
</dbReference>
<dbReference type="Pfam" id="PF00753">
    <property type="entry name" value="Lactamase_B"/>
    <property type="match status" value="1"/>
</dbReference>
<dbReference type="PIRSF" id="PIRSF005457">
    <property type="entry name" value="Glx"/>
    <property type="match status" value="1"/>
</dbReference>
<dbReference type="SMART" id="SM00849">
    <property type="entry name" value="Lactamase_B"/>
    <property type="match status" value="1"/>
</dbReference>
<dbReference type="SUPFAM" id="SSF56281">
    <property type="entry name" value="Metallo-hydrolase/oxidoreductase"/>
    <property type="match status" value="1"/>
</dbReference>
<reference key="1">
    <citation type="submission" date="2007-11" db="EMBL/GenBank/DDBJ databases">
        <authorList>
            <consortium name="The Salmonella enterica serovar Arizonae Genome Sequencing Project"/>
            <person name="McClelland M."/>
            <person name="Sanderson E.K."/>
            <person name="Porwollik S."/>
            <person name="Spieth J."/>
            <person name="Clifton W.S."/>
            <person name="Fulton R."/>
            <person name="Chunyan W."/>
            <person name="Wollam A."/>
            <person name="Shah N."/>
            <person name="Pepin K."/>
            <person name="Bhonagiri V."/>
            <person name="Nash W."/>
            <person name="Johnson M."/>
            <person name="Thiruvilangam P."/>
            <person name="Wilson R."/>
        </authorList>
    </citation>
    <scope>NUCLEOTIDE SEQUENCE [LARGE SCALE GENOMIC DNA]</scope>
    <source>
        <strain>ATCC BAA-731 / CDC346-86 / RSK2980</strain>
    </source>
</reference>
<protein>
    <recommendedName>
        <fullName evidence="1">Hydroxyacylglutathione hydrolase</fullName>
        <ecNumber evidence="1">3.1.2.6</ecNumber>
    </recommendedName>
    <alternativeName>
        <fullName evidence="1">Glyoxalase II</fullName>
        <shortName evidence="1">Glx II</shortName>
    </alternativeName>
</protein>
<comment type="function">
    <text evidence="1">Thiolesterase that catalyzes the hydrolysis of S-D-lactoyl-glutathione to form glutathione and D-lactic acid.</text>
</comment>
<comment type="catalytic activity">
    <reaction evidence="1">
        <text>an S-(2-hydroxyacyl)glutathione + H2O = a 2-hydroxy carboxylate + glutathione + H(+)</text>
        <dbReference type="Rhea" id="RHEA:21864"/>
        <dbReference type="ChEBI" id="CHEBI:15377"/>
        <dbReference type="ChEBI" id="CHEBI:15378"/>
        <dbReference type="ChEBI" id="CHEBI:57925"/>
        <dbReference type="ChEBI" id="CHEBI:58896"/>
        <dbReference type="ChEBI" id="CHEBI:71261"/>
        <dbReference type="EC" id="3.1.2.6"/>
    </reaction>
</comment>
<comment type="cofactor">
    <cofactor evidence="1">
        <name>Zn(2+)</name>
        <dbReference type="ChEBI" id="CHEBI:29105"/>
    </cofactor>
    <text evidence="1">Binds 2 Zn(2+) ions per subunit.</text>
</comment>
<comment type="pathway">
    <text evidence="1">Secondary metabolite metabolism; methylglyoxal degradation; (R)-lactate from methylglyoxal: step 2/2.</text>
</comment>
<comment type="subunit">
    <text evidence="1">Monomer.</text>
</comment>
<comment type="similarity">
    <text evidence="1">Belongs to the metallo-beta-lactamase superfamily. Glyoxalase II family.</text>
</comment>
<feature type="chain" id="PRO_1000087286" description="Hydroxyacylglutathione hydrolase">
    <location>
        <begin position="1"/>
        <end position="251"/>
    </location>
</feature>
<feature type="binding site" evidence="1">
    <location>
        <position position="53"/>
    </location>
    <ligand>
        <name>Zn(2+)</name>
        <dbReference type="ChEBI" id="CHEBI:29105"/>
        <label>1</label>
    </ligand>
</feature>
<feature type="binding site" evidence="1">
    <location>
        <position position="55"/>
    </location>
    <ligand>
        <name>Zn(2+)</name>
        <dbReference type="ChEBI" id="CHEBI:29105"/>
        <label>1</label>
    </ligand>
</feature>
<feature type="binding site" evidence="1">
    <location>
        <position position="57"/>
    </location>
    <ligand>
        <name>Zn(2+)</name>
        <dbReference type="ChEBI" id="CHEBI:29105"/>
        <label>2</label>
    </ligand>
</feature>
<feature type="binding site" evidence="1">
    <location>
        <position position="58"/>
    </location>
    <ligand>
        <name>Zn(2+)</name>
        <dbReference type="ChEBI" id="CHEBI:29105"/>
        <label>2</label>
    </ligand>
</feature>
<feature type="binding site" evidence="1">
    <location>
        <position position="110"/>
    </location>
    <ligand>
        <name>Zn(2+)</name>
        <dbReference type="ChEBI" id="CHEBI:29105"/>
        <label>1</label>
    </ligand>
</feature>
<feature type="binding site" evidence="1">
    <location>
        <position position="127"/>
    </location>
    <ligand>
        <name>Zn(2+)</name>
        <dbReference type="ChEBI" id="CHEBI:29105"/>
        <label>1</label>
    </ligand>
</feature>
<feature type="binding site" evidence="1">
    <location>
        <position position="127"/>
    </location>
    <ligand>
        <name>Zn(2+)</name>
        <dbReference type="ChEBI" id="CHEBI:29105"/>
        <label>2</label>
    </ligand>
</feature>
<feature type="binding site" evidence="1">
    <location>
        <position position="165"/>
    </location>
    <ligand>
        <name>Zn(2+)</name>
        <dbReference type="ChEBI" id="CHEBI:29105"/>
        <label>2</label>
    </ligand>
</feature>
<gene>
    <name evidence="1" type="primary">gloB</name>
    <name type="ordered locus">SARI_02741</name>
</gene>
<sequence>MNLNSIPAFQDNYIWVLNNDEGRCVIVDPGEAAPVLKAIDDHKWIPEAIFLTHHHHDHVGGVKELLQHFPQMTVYGPTETQDKGATHLVGDGDTVLVLGYNFSIFATPGHTLGHICYFSHPYLFCGDTLFSGGCGRLFEGTALQMYQSLMKINTLPDDTLICSAHEYTLANLKFALSILPHDSFINEYYRKVNELRVKKQMTLPVILKNERKINLFLRTEDIDLINEINKETILQQPEARFAWLRSKKDTF</sequence>
<organism>
    <name type="scientific">Salmonella arizonae (strain ATCC BAA-731 / CDC346-86 / RSK2980)</name>
    <dbReference type="NCBI Taxonomy" id="41514"/>
    <lineage>
        <taxon>Bacteria</taxon>
        <taxon>Pseudomonadati</taxon>
        <taxon>Pseudomonadota</taxon>
        <taxon>Gammaproteobacteria</taxon>
        <taxon>Enterobacterales</taxon>
        <taxon>Enterobacteriaceae</taxon>
        <taxon>Salmonella</taxon>
    </lineage>
</organism>
<keyword id="KW-0378">Hydrolase</keyword>
<keyword id="KW-0479">Metal-binding</keyword>
<keyword id="KW-1185">Reference proteome</keyword>
<keyword id="KW-0862">Zinc</keyword>
<accession>A9MPF3</accession>